<name>LEUC_STAHJ</name>
<organism>
    <name type="scientific">Staphylococcus haemolyticus (strain JCSC1435)</name>
    <dbReference type="NCBI Taxonomy" id="279808"/>
    <lineage>
        <taxon>Bacteria</taxon>
        <taxon>Bacillati</taxon>
        <taxon>Bacillota</taxon>
        <taxon>Bacilli</taxon>
        <taxon>Bacillales</taxon>
        <taxon>Staphylococcaceae</taxon>
        <taxon>Staphylococcus</taxon>
    </lineage>
</organism>
<protein>
    <recommendedName>
        <fullName evidence="1">3-isopropylmalate dehydratase large subunit</fullName>
        <ecNumber evidence="1">4.2.1.33</ecNumber>
    </recommendedName>
    <alternativeName>
        <fullName evidence="1">Alpha-IPM isomerase</fullName>
        <shortName evidence="1">IPMI</shortName>
    </alternativeName>
    <alternativeName>
        <fullName evidence="1">Isopropylmalate isomerase</fullName>
    </alternativeName>
</protein>
<gene>
    <name evidence="1" type="primary">leuC</name>
    <name type="ordered locus">SH0974</name>
</gene>
<reference key="1">
    <citation type="journal article" date="2005" name="J. Bacteriol.">
        <title>Whole-genome sequencing of Staphylococcus haemolyticus uncovers the extreme plasticity of its genome and the evolution of human-colonizing staphylococcal species.</title>
        <authorList>
            <person name="Takeuchi F."/>
            <person name="Watanabe S."/>
            <person name="Baba T."/>
            <person name="Yuzawa H."/>
            <person name="Ito T."/>
            <person name="Morimoto Y."/>
            <person name="Kuroda M."/>
            <person name="Cui L."/>
            <person name="Takahashi M."/>
            <person name="Ankai A."/>
            <person name="Baba S."/>
            <person name="Fukui S."/>
            <person name="Lee J.C."/>
            <person name="Hiramatsu K."/>
        </authorList>
    </citation>
    <scope>NUCLEOTIDE SEQUENCE [LARGE SCALE GENOMIC DNA]</scope>
    <source>
        <strain>JCSC1435</strain>
    </source>
</reference>
<evidence type="ECO:0000255" key="1">
    <source>
        <dbReference type="HAMAP-Rule" id="MF_01026"/>
    </source>
</evidence>
<feature type="chain" id="PRO_0000076819" description="3-isopropylmalate dehydratase large subunit">
    <location>
        <begin position="1"/>
        <end position="456"/>
    </location>
</feature>
<feature type="binding site" evidence="1">
    <location>
        <position position="336"/>
    </location>
    <ligand>
        <name>[4Fe-4S] cluster</name>
        <dbReference type="ChEBI" id="CHEBI:49883"/>
    </ligand>
</feature>
<feature type="binding site" evidence="1">
    <location>
        <position position="396"/>
    </location>
    <ligand>
        <name>[4Fe-4S] cluster</name>
        <dbReference type="ChEBI" id="CHEBI:49883"/>
    </ligand>
</feature>
<feature type="binding site" evidence="1">
    <location>
        <position position="399"/>
    </location>
    <ligand>
        <name>[4Fe-4S] cluster</name>
        <dbReference type="ChEBI" id="CHEBI:49883"/>
    </ligand>
</feature>
<comment type="function">
    <text evidence="1">Catalyzes the isomerization between 2-isopropylmalate and 3-isopropylmalate, via the formation of 2-isopropylmaleate.</text>
</comment>
<comment type="catalytic activity">
    <reaction evidence="1">
        <text>(2R,3S)-3-isopropylmalate = (2S)-2-isopropylmalate</text>
        <dbReference type="Rhea" id="RHEA:32287"/>
        <dbReference type="ChEBI" id="CHEBI:1178"/>
        <dbReference type="ChEBI" id="CHEBI:35121"/>
        <dbReference type="EC" id="4.2.1.33"/>
    </reaction>
</comment>
<comment type="cofactor">
    <cofactor evidence="1">
        <name>[4Fe-4S] cluster</name>
        <dbReference type="ChEBI" id="CHEBI:49883"/>
    </cofactor>
    <text evidence="1">Binds 1 [4Fe-4S] cluster per subunit.</text>
</comment>
<comment type="pathway">
    <text evidence="1">Amino-acid biosynthesis; L-leucine biosynthesis; L-leucine from 3-methyl-2-oxobutanoate: step 2/4.</text>
</comment>
<comment type="subunit">
    <text evidence="1">Heterodimer of LeuC and LeuD.</text>
</comment>
<comment type="similarity">
    <text evidence="1">Belongs to the aconitase/IPM isomerase family. LeuC type 1 subfamily.</text>
</comment>
<sequence>MGQTLFDKVWNKHVLTGNEGEPQLLYIDLHLIHEVTSPQAFEGLRLQNRKLRRPDLTFATLDHNVPTIDIFNIKDEIANKQITTLQKNAKEFGVQLFDMGSVEQGIVHMVGPETGLTQPGKTIVCGDSHTATHGAFGAIAFGIGTSEVEHVFATQTLWQTKPKNLKIDVTGQLPKGVYAKDIILYLISQYGVDFGTGYAIEFTGETIRSLSMEARMTICNMAIEAGAKYGLMQPDEMTFAYVKDRKYARNFDRSINDWRQLYTDADAKFDKVIKLDVTNLEPQVTWGTNPEMGVSFNTPFPKIKNINDERAYQYMGLKPGQKAEDIDLGYVFLGSCTNARLSDLVEASRIVKGKQVHPKITAIVVPGSRSVKKEAEALGLDKIFKDAGFQWREPGCSMCLGMNPDQVPEGIHCASTSNRNFEGRQGKGARTHLVSPAMAAAAAIEGRFVDVRKVVV</sequence>
<proteinExistence type="inferred from homology"/>
<dbReference type="EC" id="4.2.1.33" evidence="1"/>
<dbReference type="EMBL" id="AP006716">
    <property type="protein sequence ID" value="BAE04283.1"/>
    <property type="molecule type" value="Genomic_DNA"/>
</dbReference>
<dbReference type="RefSeq" id="WP_011275282.1">
    <property type="nucleotide sequence ID" value="NC_007168.1"/>
</dbReference>
<dbReference type="SMR" id="Q4L7U2"/>
<dbReference type="GeneID" id="93780365"/>
<dbReference type="KEGG" id="sha:SH0974"/>
<dbReference type="eggNOG" id="COG0065">
    <property type="taxonomic scope" value="Bacteria"/>
</dbReference>
<dbReference type="HOGENOM" id="CLU_006714_3_4_9"/>
<dbReference type="OrthoDB" id="9802769at2"/>
<dbReference type="UniPathway" id="UPA00048">
    <property type="reaction ID" value="UER00071"/>
</dbReference>
<dbReference type="Proteomes" id="UP000000543">
    <property type="component" value="Chromosome"/>
</dbReference>
<dbReference type="GO" id="GO:0003861">
    <property type="term" value="F:3-isopropylmalate dehydratase activity"/>
    <property type="evidence" value="ECO:0007669"/>
    <property type="project" value="UniProtKB-UniRule"/>
</dbReference>
<dbReference type="GO" id="GO:0051539">
    <property type="term" value="F:4 iron, 4 sulfur cluster binding"/>
    <property type="evidence" value="ECO:0007669"/>
    <property type="project" value="UniProtKB-KW"/>
</dbReference>
<dbReference type="GO" id="GO:0046872">
    <property type="term" value="F:metal ion binding"/>
    <property type="evidence" value="ECO:0007669"/>
    <property type="project" value="UniProtKB-KW"/>
</dbReference>
<dbReference type="GO" id="GO:0009098">
    <property type="term" value="P:L-leucine biosynthetic process"/>
    <property type="evidence" value="ECO:0007669"/>
    <property type="project" value="UniProtKB-UniRule"/>
</dbReference>
<dbReference type="CDD" id="cd01583">
    <property type="entry name" value="IPMI"/>
    <property type="match status" value="1"/>
</dbReference>
<dbReference type="Gene3D" id="3.30.499.10">
    <property type="entry name" value="Aconitase, domain 3"/>
    <property type="match status" value="2"/>
</dbReference>
<dbReference type="HAMAP" id="MF_01026">
    <property type="entry name" value="LeuC_type1"/>
    <property type="match status" value="1"/>
</dbReference>
<dbReference type="InterPro" id="IPR004430">
    <property type="entry name" value="3-IsopropMal_deHydase_lsu"/>
</dbReference>
<dbReference type="InterPro" id="IPR015931">
    <property type="entry name" value="Acnase/IPM_dHydase_lsu_aba_1/3"/>
</dbReference>
<dbReference type="InterPro" id="IPR001030">
    <property type="entry name" value="Acoase/IPM_deHydtase_lsu_aba"/>
</dbReference>
<dbReference type="InterPro" id="IPR018136">
    <property type="entry name" value="Aconitase_4Fe-4S_BS"/>
</dbReference>
<dbReference type="InterPro" id="IPR036008">
    <property type="entry name" value="Aconitase_4Fe-4S_dom"/>
</dbReference>
<dbReference type="InterPro" id="IPR050067">
    <property type="entry name" value="IPM_dehydratase_rel_enz"/>
</dbReference>
<dbReference type="InterPro" id="IPR033941">
    <property type="entry name" value="IPMI_cat"/>
</dbReference>
<dbReference type="NCBIfam" id="TIGR00170">
    <property type="entry name" value="leuC"/>
    <property type="match status" value="1"/>
</dbReference>
<dbReference type="NCBIfam" id="NF004016">
    <property type="entry name" value="PRK05478.1"/>
    <property type="match status" value="1"/>
</dbReference>
<dbReference type="NCBIfam" id="NF009116">
    <property type="entry name" value="PRK12466.1"/>
    <property type="match status" value="1"/>
</dbReference>
<dbReference type="PANTHER" id="PTHR43822:SF9">
    <property type="entry name" value="3-ISOPROPYLMALATE DEHYDRATASE"/>
    <property type="match status" value="1"/>
</dbReference>
<dbReference type="PANTHER" id="PTHR43822">
    <property type="entry name" value="HOMOACONITASE, MITOCHONDRIAL-RELATED"/>
    <property type="match status" value="1"/>
</dbReference>
<dbReference type="Pfam" id="PF00330">
    <property type="entry name" value="Aconitase"/>
    <property type="match status" value="1"/>
</dbReference>
<dbReference type="PRINTS" id="PR00415">
    <property type="entry name" value="ACONITASE"/>
</dbReference>
<dbReference type="SUPFAM" id="SSF53732">
    <property type="entry name" value="Aconitase iron-sulfur domain"/>
    <property type="match status" value="1"/>
</dbReference>
<dbReference type="PROSITE" id="PS00450">
    <property type="entry name" value="ACONITASE_1"/>
    <property type="match status" value="1"/>
</dbReference>
<dbReference type="PROSITE" id="PS01244">
    <property type="entry name" value="ACONITASE_2"/>
    <property type="match status" value="1"/>
</dbReference>
<accession>Q4L7U2</accession>
<keyword id="KW-0004">4Fe-4S</keyword>
<keyword id="KW-0028">Amino-acid biosynthesis</keyword>
<keyword id="KW-0100">Branched-chain amino acid biosynthesis</keyword>
<keyword id="KW-0408">Iron</keyword>
<keyword id="KW-0411">Iron-sulfur</keyword>
<keyword id="KW-0432">Leucine biosynthesis</keyword>
<keyword id="KW-0456">Lyase</keyword>
<keyword id="KW-0479">Metal-binding</keyword>